<sequence>MSTAKLVKSAPSELLYTRNDLDDSVKTSTIALLNQLVVDFIDLSLITKQAHWNMRGANFIAVHEMLDGFRTSIIDHQDTIAERVVQIGGVALGTVQIVGKQTSLKSYPTTIHSVQDHLKALAERYAIVANNVRQAIGKTEDEASADILTAASRDLDQFLWFIESNIE</sequence>
<dbReference type="EC" id="1.16.-.-" evidence="1"/>
<dbReference type="EMBL" id="BX950851">
    <property type="protein sequence ID" value="CAG75667.1"/>
    <property type="molecule type" value="Genomic_DNA"/>
</dbReference>
<dbReference type="RefSeq" id="WP_011094302.1">
    <property type="nucleotide sequence ID" value="NC_004547.2"/>
</dbReference>
<dbReference type="SMR" id="Q6D3H7"/>
<dbReference type="STRING" id="218491.ECA2767"/>
<dbReference type="GeneID" id="57208541"/>
<dbReference type="KEGG" id="eca:ECA2767"/>
<dbReference type="eggNOG" id="COG0783">
    <property type="taxonomic scope" value="Bacteria"/>
</dbReference>
<dbReference type="HOGENOM" id="CLU_098183_1_2_6"/>
<dbReference type="OrthoDB" id="9797687at2"/>
<dbReference type="Proteomes" id="UP000007966">
    <property type="component" value="Chromosome"/>
</dbReference>
<dbReference type="GO" id="GO:0005737">
    <property type="term" value="C:cytoplasm"/>
    <property type="evidence" value="ECO:0007669"/>
    <property type="project" value="UniProtKB-SubCell"/>
</dbReference>
<dbReference type="GO" id="GO:0003677">
    <property type="term" value="F:DNA binding"/>
    <property type="evidence" value="ECO:0007669"/>
    <property type="project" value="UniProtKB-UniRule"/>
</dbReference>
<dbReference type="GO" id="GO:0008199">
    <property type="term" value="F:ferric iron binding"/>
    <property type="evidence" value="ECO:0007669"/>
    <property type="project" value="UniProtKB-UniRule"/>
</dbReference>
<dbReference type="GO" id="GO:0016722">
    <property type="term" value="F:oxidoreductase activity, acting on metal ions"/>
    <property type="evidence" value="ECO:0007669"/>
    <property type="project" value="InterPro"/>
</dbReference>
<dbReference type="GO" id="GO:0030261">
    <property type="term" value="P:chromosome condensation"/>
    <property type="evidence" value="ECO:0007669"/>
    <property type="project" value="UniProtKB-KW"/>
</dbReference>
<dbReference type="GO" id="GO:0006879">
    <property type="term" value="P:intracellular iron ion homeostasis"/>
    <property type="evidence" value="ECO:0007669"/>
    <property type="project" value="UniProtKB-KW"/>
</dbReference>
<dbReference type="CDD" id="cd01043">
    <property type="entry name" value="DPS"/>
    <property type="match status" value="1"/>
</dbReference>
<dbReference type="Gene3D" id="1.20.1260.10">
    <property type="match status" value="1"/>
</dbReference>
<dbReference type="HAMAP" id="MF_01441">
    <property type="entry name" value="Dps"/>
    <property type="match status" value="1"/>
</dbReference>
<dbReference type="InterPro" id="IPR002177">
    <property type="entry name" value="DPS_DNA-bd"/>
</dbReference>
<dbReference type="InterPro" id="IPR023188">
    <property type="entry name" value="DPS_DNA-bd_CS"/>
</dbReference>
<dbReference type="InterPro" id="IPR023067">
    <property type="entry name" value="Dps_gammaproteobac"/>
</dbReference>
<dbReference type="InterPro" id="IPR012347">
    <property type="entry name" value="Ferritin-like"/>
</dbReference>
<dbReference type="InterPro" id="IPR009078">
    <property type="entry name" value="Ferritin-like_SF"/>
</dbReference>
<dbReference type="InterPro" id="IPR008331">
    <property type="entry name" value="Ferritin_DPS_dom"/>
</dbReference>
<dbReference type="NCBIfam" id="NF006975">
    <property type="entry name" value="PRK09448.1"/>
    <property type="match status" value="1"/>
</dbReference>
<dbReference type="PANTHER" id="PTHR42932:SF3">
    <property type="entry name" value="DNA PROTECTION DURING STARVATION PROTEIN"/>
    <property type="match status" value="1"/>
</dbReference>
<dbReference type="PANTHER" id="PTHR42932">
    <property type="entry name" value="GENERAL STRESS PROTEIN 20U"/>
    <property type="match status" value="1"/>
</dbReference>
<dbReference type="Pfam" id="PF00210">
    <property type="entry name" value="Ferritin"/>
    <property type="match status" value="1"/>
</dbReference>
<dbReference type="PIRSF" id="PIRSF005900">
    <property type="entry name" value="Dps"/>
    <property type="match status" value="1"/>
</dbReference>
<dbReference type="PRINTS" id="PR01346">
    <property type="entry name" value="HELNAPAPROT"/>
</dbReference>
<dbReference type="SUPFAM" id="SSF47240">
    <property type="entry name" value="Ferritin-like"/>
    <property type="match status" value="1"/>
</dbReference>
<dbReference type="PROSITE" id="PS00818">
    <property type="entry name" value="DPS_1"/>
    <property type="match status" value="1"/>
</dbReference>
<name>DPS_PECAS</name>
<feature type="chain" id="PRO_0000271585" description="DNA protection during starvation protein">
    <location>
        <begin position="1"/>
        <end position="167"/>
    </location>
</feature>
<feature type="binding site" evidence="1">
    <location>
        <position position="51"/>
    </location>
    <ligand>
        <name>Fe cation</name>
        <dbReference type="ChEBI" id="CHEBI:24875"/>
    </ligand>
</feature>
<feature type="binding site" evidence="1">
    <location>
        <position position="78"/>
    </location>
    <ligand>
        <name>Fe cation</name>
        <dbReference type="ChEBI" id="CHEBI:24875"/>
    </ligand>
</feature>
<feature type="binding site" evidence="1">
    <location>
        <position position="82"/>
    </location>
    <ligand>
        <name>Fe cation</name>
        <dbReference type="ChEBI" id="CHEBI:24875"/>
    </ligand>
</feature>
<protein>
    <recommendedName>
        <fullName evidence="1">DNA protection during starvation protein</fullName>
        <ecNumber evidence="1">1.16.-.-</ecNumber>
    </recommendedName>
</protein>
<keyword id="KW-0963">Cytoplasm</keyword>
<keyword id="KW-0226">DNA condensation</keyword>
<keyword id="KW-0238">DNA-binding</keyword>
<keyword id="KW-0408">Iron</keyword>
<keyword id="KW-0409">Iron storage</keyword>
<keyword id="KW-0479">Metal-binding</keyword>
<keyword id="KW-0560">Oxidoreductase</keyword>
<keyword id="KW-1185">Reference proteome</keyword>
<gene>
    <name evidence="1" type="primary">dps</name>
    <name type="ordered locus">ECA2767</name>
</gene>
<accession>Q6D3H7</accession>
<proteinExistence type="inferred from homology"/>
<comment type="function">
    <text evidence="1">During stationary phase, binds the chromosome non-specifically, forming a highly ordered and stable dps-DNA co-crystal within which chromosomal DNA is condensed and protected from diverse damages. It protects DNA from oxidative damage by sequestering intracellular Fe(2+) ion and storing it in the form of Fe(3+) oxyhydroxide mineral, which can be released after reduction. One hydrogen peroxide oxidizes two Fe(2+) ions, which prevents hydroxyl radical production by the Fenton reaction.</text>
</comment>
<comment type="catalytic activity">
    <reaction evidence="1">
        <text>2 Fe(2+) + H2O2 + 2 H(+) = 2 Fe(3+) + 2 H2O</text>
        <dbReference type="Rhea" id="RHEA:48712"/>
        <dbReference type="ChEBI" id="CHEBI:15377"/>
        <dbReference type="ChEBI" id="CHEBI:15378"/>
        <dbReference type="ChEBI" id="CHEBI:16240"/>
        <dbReference type="ChEBI" id="CHEBI:29033"/>
        <dbReference type="ChEBI" id="CHEBI:29034"/>
    </reaction>
</comment>
<comment type="subunit">
    <text evidence="1">Homododecamer. The 12 subunits form a hollow sphere into which the mineral iron core of up to 500 Fe(3+) can be deposited.</text>
</comment>
<comment type="subcellular location">
    <subcellularLocation>
        <location evidence="1">Cytoplasm</location>
    </subcellularLocation>
</comment>
<comment type="similarity">
    <text evidence="1">Belongs to the Dps family.</text>
</comment>
<organism>
    <name type="scientific">Pectobacterium atrosepticum (strain SCRI 1043 / ATCC BAA-672)</name>
    <name type="common">Erwinia carotovora subsp. atroseptica</name>
    <dbReference type="NCBI Taxonomy" id="218491"/>
    <lineage>
        <taxon>Bacteria</taxon>
        <taxon>Pseudomonadati</taxon>
        <taxon>Pseudomonadota</taxon>
        <taxon>Gammaproteobacteria</taxon>
        <taxon>Enterobacterales</taxon>
        <taxon>Pectobacteriaceae</taxon>
        <taxon>Pectobacterium</taxon>
    </lineage>
</organism>
<evidence type="ECO:0000255" key="1">
    <source>
        <dbReference type="HAMAP-Rule" id="MF_01441"/>
    </source>
</evidence>
<reference key="1">
    <citation type="journal article" date="2004" name="Proc. Natl. Acad. Sci. U.S.A.">
        <title>Genome sequence of the enterobacterial phytopathogen Erwinia carotovora subsp. atroseptica and characterization of virulence factors.</title>
        <authorList>
            <person name="Bell K.S."/>
            <person name="Sebaihia M."/>
            <person name="Pritchard L."/>
            <person name="Holden M.T.G."/>
            <person name="Hyman L.J."/>
            <person name="Holeva M.C."/>
            <person name="Thomson N.R."/>
            <person name="Bentley S.D."/>
            <person name="Churcher L.J.C."/>
            <person name="Mungall K."/>
            <person name="Atkin R."/>
            <person name="Bason N."/>
            <person name="Brooks K."/>
            <person name="Chillingworth T."/>
            <person name="Clark K."/>
            <person name="Doggett J."/>
            <person name="Fraser A."/>
            <person name="Hance Z."/>
            <person name="Hauser H."/>
            <person name="Jagels K."/>
            <person name="Moule S."/>
            <person name="Norbertczak H."/>
            <person name="Ormond D."/>
            <person name="Price C."/>
            <person name="Quail M.A."/>
            <person name="Sanders M."/>
            <person name="Walker D."/>
            <person name="Whitehead S."/>
            <person name="Salmond G.P.C."/>
            <person name="Birch P.R.J."/>
            <person name="Parkhill J."/>
            <person name="Toth I.K."/>
        </authorList>
    </citation>
    <scope>NUCLEOTIDE SEQUENCE [LARGE SCALE GENOMIC DNA]</scope>
    <source>
        <strain>SCRI 1043 / ATCC BAA-672</strain>
    </source>
</reference>